<dbReference type="EC" id="3.1.-.-" evidence="1"/>
<dbReference type="EMBL" id="CP000764">
    <property type="protein sequence ID" value="ABS23255.1"/>
    <property type="molecule type" value="Genomic_DNA"/>
</dbReference>
<dbReference type="RefSeq" id="WP_012095492.1">
    <property type="nucleotide sequence ID" value="NC_009674.1"/>
</dbReference>
<dbReference type="SMR" id="A7GSZ7"/>
<dbReference type="STRING" id="315749.Bcer98_3029"/>
<dbReference type="GeneID" id="33898275"/>
<dbReference type="KEGG" id="bcy:Bcer98_3029"/>
<dbReference type="eggNOG" id="COG0319">
    <property type="taxonomic scope" value="Bacteria"/>
</dbReference>
<dbReference type="HOGENOM" id="CLU_106710_3_0_9"/>
<dbReference type="OrthoDB" id="9807740at2"/>
<dbReference type="Proteomes" id="UP000002300">
    <property type="component" value="Chromosome"/>
</dbReference>
<dbReference type="GO" id="GO:0005737">
    <property type="term" value="C:cytoplasm"/>
    <property type="evidence" value="ECO:0007669"/>
    <property type="project" value="UniProtKB-SubCell"/>
</dbReference>
<dbReference type="GO" id="GO:0004222">
    <property type="term" value="F:metalloendopeptidase activity"/>
    <property type="evidence" value="ECO:0007669"/>
    <property type="project" value="InterPro"/>
</dbReference>
<dbReference type="GO" id="GO:0004521">
    <property type="term" value="F:RNA endonuclease activity"/>
    <property type="evidence" value="ECO:0007669"/>
    <property type="project" value="UniProtKB-UniRule"/>
</dbReference>
<dbReference type="GO" id="GO:0008270">
    <property type="term" value="F:zinc ion binding"/>
    <property type="evidence" value="ECO:0007669"/>
    <property type="project" value="UniProtKB-UniRule"/>
</dbReference>
<dbReference type="GO" id="GO:0006364">
    <property type="term" value="P:rRNA processing"/>
    <property type="evidence" value="ECO:0007669"/>
    <property type="project" value="UniProtKB-UniRule"/>
</dbReference>
<dbReference type="Gene3D" id="3.40.390.30">
    <property type="entry name" value="Metalloproteases ('zincins'), catalytic domain"/>
    <property type="match status" value="1"/>
</dbReference>
<dbReference type="HAMAP" id="MF_00009">
    <property type="entry name" value="Endoribonucl_YbeY"/>
    <property type="match status" value="1"/>
</dbReference>
<dbReference type="InterPro" id="IPR023091">
    <property type="entry name" value="MetalPrtase_cat_dom_sf_prd"/>
</dbReference>
<dbReference type="InterPro" id="IPR002036">
    <property type="entry name" value="YbeY"/>
</dbReference>
<dbReference type="InterPro" id="IPR020549">
    <property type="entry name" value="YbeY_CS"/>
</dbReference>
<dbReference type="NCBIfam" id="TIGR00043">
    <property type="entry name" value="rRNA maturation RNase YbeY"/>
    <property type="match status" value="1"/>
</dbReference>
<dbReference type="PANTHER" id="PTHR46986">
    <property type="entry name" value="ENDORIBONUCLEASE YBEY, CHLOROPLASTIC"/>
    <property type="match status" value="1"/>
</dbReference>
<dbReference type="PANTHER" id="PTHR46986:SF1">
    <property type="entry name" value="ENDORIBONUCLEASE YBEY, CHLOROPLASTIC"/>
    <property type="match status" value="1"/>
</dbReference>
<dbReference type="Pfam" id="PF02130">
    <property type="entry name" value="YbeY"/>
    <property type="match status" value="1"/>
</dbReference>
<dbReference type="SUPFAM" id="SSF55486">
    <property type="entry name" value="Metalloproteases ('zincins'), catalytic domain"/>
    <property type="match status" value="1"/>
</dbReference>
<dbReference type="PROSITE" id="PS01306">
    <property type="entry name" value="UPF0054"/>
    <property type="match status" value="1"/>
</dbReference>
<name>YBEY_BACCN</name>
<reference key="1">
    <citation type="journal article" date="2008" name="Chem. Biol. Interact.">
        <title>Extending the Bacillus cereus group genomics to putative food-borne pathogens of different toxicity.</title>
        <authorList>
            <person name="Lapidus A."/>
            <person name="Goltsman E."/>
            <person name="Auger S."/>
            <person name="Galleron N."/>
            <person name="Segurens B."/>
            <person name="Dossat C."/>
            <person name="Land M.L."/>
            <person name="Broussolle V."/>
            <person name="Brillard J."/>
            <person name="Guinebretiere M.-H."/>
            <person name="Sanchis V."/>
            <person name="Nguen-the C."/>
            <person name="Lereclus D."/>
            <person name="Richardson P."/>
            <person name="Wincker P."/>
            <person name="Weissenbach J."/>
            <person name="Ehrlich S.D."/>
            <person name="Sorokin A."/>
        </authorList>
    </citation>
    <scope>NUCLEOTIDE SEQUENCE [LARGE SCALE GENOMIC DNA]</scope>
    <source>
        <strain>DSM 22905 / CIP 110041 / 391-98 / NVH 391-98</strain>
    </source>
</reference>
<comment type="function">
    <text evidence="1">Single strand-specific metallo-endoribonuclease involved in late-stage 70S ribosome quality control and in maturation of the 3' terminus of the 16S rRNA.</text>
</comment>
<comment type="cofactor">
    <cofactor evidence="1">
        <name>Zn(2+)</name>
        <dbReference type="ChEBI" id="CHEBI:29105"/>
    </cofactor>
    <text evidence="1">Binds 1 zinc ion.</text>
</comment>
<comment type="subcellular location">
    <subcellularLocation>
        <location evidence="1">Cytoplasm</location>
    </subcellularLocation>
</comment>
<comment type="similarity">
    <text evidence="1">Belongs to the endoribonuclease YbeY family.</text>
</comment>
<organism>
    <name type="scientific">Bacillus cytotoxicus (strain DSM 22905 / CIP 110041 / 391-98 / NVH 391-98)</name>
    <dbReference type="NCBI Taxonomy" id="315749"/>
    <lineage>
        <taxon>Bacteria</taxon>
        <taxon>Bacillati</taxon>
        <taxon>Bacillota</taxon>
        <taxon>Bacilli</taxon>
        <taxon>Bacillales</taxon>
        <taxon>Bacillaceae</taxon>
        <taxon>Bacillus</taxon>
        <taxon>Bacillus cereus group</taxon>
    </lineage>
</organism>
<keyword id="KW-0963">Cytoplasm</keyword>
<keyword id="KW-0255">Endonuclease</keyword>
<keyword id="KW-0378">Hydrolase</keyword>
<keyword id="KW-0479">Metal-binding</keyword>
<keyword id="KW-0540">Nuclease</keyword>
<keyword id="KW-0690">Ribosome biogenesis</keyword>
<keyword id="KW-0698">rRNA processing</keyword>
<keyword id="KW-0862">Zinc</keyword>
<protein>
    <recommendedName>
        <fullName evidence="1">Endoribonuclease YbeY</fullName>
        <ecNumber evidence="1">3.1.-.-</ecNumber>
    </recommendedName>
</protein>
<accession>A7GSZ7</accession>
<feature type="chain" id="PRO_1000073893" description="Endoribonuclease YbeY">
    <location>
        <begin position="1"/>
        <end position="156"/>
    </location>
</feature>
<feature type="binding site" evidence="1">
    <location>
        <position position="122"/>
    </location>
    <ligand>
        <name>Zn(2+)</name>
        <dbReference type="ChEBI" id="CHEBI:29105"/>
        <note>catalytic</note>
    </ligand>
</feature>
<feature type="binding site" evidence="1">
    <location>
        <position position="126"/>
    </location>
    <ligand>
        <name>Zn(2+)</name>
        <dbReference type="ChEBI" id="CHEBI:29105"/>
        <note>catalytic</note>
    </ligand>
</feature>
<feature type="binding site" evidence="1">
    <location>
        <position position="132"/>
    </location>
    <ligand>
        <name>Zn(2+)</name>
        <dbReference type="ChEBI" id="CHEBI:29105"/>
        <note>catalytic</note>
    </ligand>
</feature>
<sequence length="156" mass="17996">MSLVIDFFDETEEVKEEYVNMIRELLEKAAQMEGVEDGTELSVTFVDNERIREINRDYRGKDQPTDVISFALEDMGEGEVEIIGADMPRMLGDLIISIPRTKEQAEEYGHSFDRELGFLALHGFLHLLGYDHMTEEDEKEMFGKQKEILGAFGLRR</sequence>
<evidence type="ECO:0000255" key="1">
    <source>
        <dbReference type="HAMAP-Rule" id="MF_00009"/>
    </source>
</evidence>
<gene>
    <name evidence="1" type="primary">ybeY</name>
    <name type="ordered locus">Bcer98_3029</name>
</gene>
<proteinExistence type="inferred from homology"/>